<organism>
    <name type="scientific">Clavibacter michiganensis subsp. michiganensis (strain NCPPB 382)</name>
    <dbReference type="NCBI Taxonomy" id="443906"/>
    <lineage>
        <taxon>Bacteria</taxon>
        <taxon>Bacillati</taxon>
        <taxon>Actinomycetota</taxon>
        <taxon>Actinomycetes</taxon>
        <taxon>Micrococcales</taxon>
        <taxon>Microbacteriaceae</taxon>
        <taxon>Clavibacter</taxon>
    </lineage>
</organism>
<accession>A5CV36</accession>
<protein>
    <recommendedName>
        <fullName evidence="1">Isopentenyl-diphosphate Delta-isomerase</fullName>
        <shortName evidence="1">IPP isomerase</shortName>
        <ecNumber evidence="1">5.3.3.2</ecNumber>
    </recommendedName>
    <alternativeName>
        <fullName evidence="1">IPP:DMAPP isomerase</fullName>
    </alternativeName>
    <alternativeName>
        <fullName evidence="1">Isopentenyl pyrophosphate isomerase</fullName>
    </alternativeName>
</protein>
<feature type="chain" id="PRO_0000325212" description="Isopentenyl-diphosphate Delta-isomerase">
    <location>
        <begin position="1"/>
        <end position="194"/>
    </location>
</feature>
<feature type="domain" description="Nudix hydrolase">
    <location>
        <begin position="32"/>
        <end position="166"/>
    </location>
</feature>
<feature type="active site" evidence="1">
    <location>
        <position position="69"/>
    </location>
</feature>
<feature type="active site" evidence="1">
    <location>
        <position position="118"/>
    </location>
</feature>
<feature type="binding site" evidence="1">
    <location>
        <position position="27"/>
    </location>
    <ligand>
        <name>Mn(2+)</name>
        <dbReference type="ChEBI" id="CHEBI:29035"/>
    </ligand>
</feature>
<feature type="binding site" evidence="1">
    <location>
        <position position="34"/>
    </location>
    <ligand>
        <name>Mn(2+)</name>
        <dbReference type="ChEBI" id="CHEBI:29035"/>
    </ligand>
</feature>
<feature type="binding site" evidence="1">
    <location>
        <position position="71"/>
    </location>
    <ligand>
        <name>Mn(2+)</name>
        <dbReference type="ChEBI" id="CHEBI:29035"/>
    </ligand>
</feature>
<feature type="binding site" evidence="1">
    <location>
        <position position="89"/>
    </location>
    <ligand>
        <name>Mg(2+)</name>
        <dbReference type="ChEBI" id="CHEBI:18420"/>
    </ligand>
</feature>
<feature type="binding site" evidence="1">
    <location>
        <position position="116"/>
    </location>
    <ligand>
        <name>Mn(2+)</name>
        <dbReference type="ChEBI" id="CHEBI:29035"/>
    </ligand>
</feature>
<feature type="binding site" evidence="1">
    <location>
        <position position="118"/>
    </location>
    <ligand>
        <name>Mn(2+)</name>
        <dbReference type="ChEBI" id="CHEBI:29035"/>
    </ligand>
</feature>
<name>IDI_CLAM3</name>
<dbReference type="EC" id="5.3.3.2" evidence="1"/>
<dbReference type="EMBL" id="AM711867">
    <property type="protein sequence ID" value="CAN02975.1"/>
    <property type="molecule type" value="Genomic_DNA"/>
</dbReference>
<dbReference type="RefSeq" id="WP_012039577.1">
    <property type="nucleotide sequence ID" value="NC_009480.1"/>
</dbReference>
<dbReference type="SMR" id="A5CV36"/>
<dbReference type="KEGG" id="cmi:CMM_2889"/>
<dbReference type="eggNOG" id="COG1443">
    <property type="taxonomic scope" value="Bacteria"/>
</dbReference>
<dbReference type="HOGENOM" id="CLU_060552_2_0_11"/>
<dbReference type="OrthoDB" id="9809458at2"/>
<dbReference type="UniPathway" id="UPA00059">
    <property type="reaction ID" value="UER00104"/>
</dbReference>
<dbReference type="Proteomes" id="UP000001564">
    <property type="component" value="Chromosome"/>
</dbReference>
<dbReference type="GO" id="GO:0005737">
    <property type="term" value="C:cytoplasm"/>
    <property type="evidence" value="ECO:0007669"/>
    <property type="project" value="UniProtKB-SubCell"/>
</dbReference>
<dbReference type="GO" id="GO:0004452">
    <property type="term" value="F:isopentenyl-diphosphate delta-isomerase activity"/>
    <property type="evidence" value="ECO:0007669"/>
    <property type="project" value="UniProtKB-UniRule"/>
</dbReference>
<dbReference type="GO" id="GO:0046872">
    <property type="term" value="F:metal ion binding"/>
    <property type="evidence" value="ECO:0007669"/>
    <property type="project" value="UniProtKB-KW"/>
</dbReference>
<dbReference type="GO" id="GO:0050992">
    <property type="term" value="P:dimethylallyl diphosphate biosynthetic process"/>
    <property type="evidence" value="ECO:0007669"/>
    <property type="project" value="UniProtKB-UniRule"/>
</dbReference>
<dbReference type="GO" id="GO:0008299">
    <property type="term" value="P:isoprenoid biosynthetic process"/>
    <property type="evidence" value="ECO:0007669"/>
    <property type="project" value="UniProtKB-KW"/>
</dbReference>
<dbReference type="CDD" id="cd02885">
    <property type="entry name" value="NUDIX_IPP_Isomerase"/>
    <property type="match status" value="1"/>
</dbReference>
<dbReference type="FunFam" id="3.90.79.10:FF:000009">
    <property type="entry name" value="Isopentenyl-diphosphate Delta-isomerase"/>
    <property type="match status" value="1"/>
</dbReference>
<dbReference type="Gene3D" id="3.90.79.10">
    <property type="entry name" value="Nucleoside Triphosphate Pyrophosphohydrolase"/>
    <property type="match status" value="1"/>
</dbReference>
<dbReference type="HAMAP" id="MF_00202">
    <property type="entry name" value="Idi"/>
    <property type="match status" value="1"/>
</dbReference>
<dbReference type="InterPro" id="IPR056375">
    <property type="entry name" value="Idi_bact"/>
</dbReference>
<dbReference type="InterPro" id="IPR011876">
    <property type="entry name" value="IsopentenylPP_isomerase_typ1"/>
</dbReference>
<dbReference type="InterPro" id="IPR015797">
    <property type="entry name" value="NUDIX_hydrolase-like_dom_sf"/>
</dbReference>
<dbReference type="InterPro" id="IPR000086">
    <property type="entry name" value="NUDIX_hydrolase_dom"/>
</dbReference>
<dbReference type="NCBIfam" id="TIGR02150">
    <property type="entry name" value="IPP_isom_1"/>
    <property type="match status" value="1"/>
</dbReference>
<dbReference type="NCBIfam" id="NF002995">
    <property type="entry name" value="PRK03759.1"/>
    <property type="match status" value="1"/>
</dbReference>
<dbReference type="PANTHER" id="PTHR10885">
    <property type="entry name" value="ISOPENTENYL-DIPHOSPHATE DELTA-ISOMERASE"/>
    <property type="match status" value="1"/>
</dbReference>
<dbReference type="PANTHER" id="PTHR10885:SF0">
    <property type="entry name" value="ISOPENTENYL-DIPHOSPHATE DELTA-ISOMERASE"/>
    <property type="match status" value="1"/>
</dbReference>
<dbReference type="Pfam" id="PF00293">
    <property type="entry name" value="NUDIX"/>
    <property type="match status" value="1"/>
</dbReference>
<dbReference type="PIRSF" id="PIRSF018427">
    <property type="entry name" value="Isopntndiph_ism"/>
    <property type="match status" value="1"/>
</dbReference>
<dbReference type="SUPFAM" id="SSF55811">
    <property type="entry name" value="Nudix"/>
    <property type="match status" value="1"/>
</dbReference>
<dbReference type="PROSITE" id="PS51462">
    <property type="entry name" value="NUDIX"/>
    <property type="match status" value="1"/>
</dbReference>
<gene>
    <name evidence="1" type="primary">idi</name>
    <name type="ordered locus">CMM_2889</name>
</gene>
<reference key="1">
    <citation type="journal article" date="2008" name="J. Bacteriol.">
        <title>The genome sequence of the tomato-pathogenic actinomycete Clavibacter michiganensis subsp. michiganensis NCPPB382 reveals a large island involved in pathogenicity.</title>
        <authorList>
            <person name="Gartemann K.-H."/>
            <person name="Abt B."/>
            <person name="Bekel T."/>
            <person name="Burger A."/>
            <person name="Engemann J."/>
            <person name="Fluegel M."/>
            <person name="Gaigalat L."/>
            <person name="Goesmann A."/>
            <person name="Graefen I."/>
            <person name="Kalinowski J."/>
            <person name="Kaup O."/>
            <person name="Kirchner O."/>
            <person name="Krause L."/>
            <person name="Linke B."/>
            <person name="McHardy A."/>
            <person name="Meyer F."/>
            <person name="Pohle S."/>
            <person name="Rueckert C."/>
            <person name="Schneiker S."/>
            <person name="Zellermann E.-M."/>
            <person name="Puehler A."/>
            <person name="Eichenlaub R."/>
            <person name="Kaiser O."/>
            <person name="Bartels D."/>
        </authorList>
    </citation>
    <scope>NUCLEOTIDE SEQUENCE [LARGE SCALE GENOMIC DNA]</scope>
    <source>
        <strain>NCPPB 382</strain>
    </source>
</reference>
<sequence length="194" mass="21180">MPQHTELVVLLDDDGETIGTAPKATVHTRDTALHLAFSCHVFDAQGRILVTRRAIGKLTWPGVWTNSFCGHPAPDEDMREAVHRRAEQELGLELESVELVLPDFRYRATDAAGVVENEICPVFRAVAASPVDPRPEEVGEYQWVDPEQLIPAVAHTPWAFSPWLTLQLPLLYPEHAAHSGLAETAAAAAAVPAA</sequence>
<keyword id="KW-0963">Cytoplasm</keyword>
<keyword id="KW-0413">Isomerase</keyword>
<keyword id="KW-0414">Isoprene biosynthesis</keyword>
<keyword id="KW-0460">Magnesium</keyword>
<keyword id="KW-0464">Manganese</keyword>
<keyword id="KW-0479">Metal-binding</keyword>
<evidence type="ECO:0000255" key="1">
    <source>
        <dbReference type="HAMAP-Rule" id="MF_00202"/>
    </source>
</evidence>
<proteinExistence type="inferred from homology"/>
<comment type="function">
    <text evidence="1">Catalyzes the 1,3-allylic rearrangement of the homoallylic substrate isopentenyl (IPP) to its highly electrophilic allylic isomer, dimethylallyl diphosphate (DMAPP).</text>
</comment>
<comment type="catalytic activity">
    <reaction evidence="1">
        <text>isopentenyl diphosphate = dimethylallyl diphosphate</text>
        <dbReference type="Rhea" id="RHEA:23284"/>
        <dbReference type="ChEBI" id="CHEBI:57623"/>
        <dbReference type="ChEBI" id="CHEBI:128769"/>
        <dbReference type="EC" id="5.3.3.2"/>
    </reaction>
</comment>
<comment type="cofactor">
    <cofactor evidence="1">
        <name>Mg(2+)</name>
        <dbReference type="ChEBI" id="CHEBI:18420"/>
    </cofactor>
    <text evidence="1">Binds 1 Mg(2+) ion per subunit. The magnesium ion binds only when substrate is bound.</text>
</comment>
<comment type="cofactor">
    <cofactor evidence="1">
        <name>Mn(2+)</name>
        <dbReference type="ChEBI" id="CHEBI:29035"/>
    </cofactor>
    <text evidence="1">Binds 1 Mn(2+) ion per subunit.</text>
</comment>
<comment type="pathway">
    <text evidence="1">Isoprenoid biosynthesis; dimethylallyl diphosphate biosynthesis; dimethylallyl diphosphate from isopentenyl diphosphate: step 1/1.</text>
</comment>
<comment type="subcellular location">
    <subcellularLocation>
        <location evidence="1">Cytoplasm</location>
    </subcellularLocation>
</comment>
<comment type="similarity">
    <text evidence="1">Belongs to the IPP isomerase type 1 family.</text>
</comment>